<reference key="1">
    <citation type="journal article" date="2003" name="Nature">
        <title>The genome of a motile marine Synechococcus.</title>
        <authorList>
            <person name="Palenik B."/>
            <person name="Brahamsha B."/>
            <person name="Larimer F.W."/>
            <person name="Land M.L."/>
            <person name="Hauser L."/>
            <person name="Chain P."/>
            <person name="Lamerdin J.E."/>
            <person name="Regala W."/>
            <person name="Allen E.E."/>
            <person name="McCarren J."/>
            <person name="Paulsen I.T."/>
            <person name="Dufresne A."/>
            <person name="Partensky F."/>
            <person name="Webb E.A."/>
            <person name="Waterbury J."/>
        </authorList>
    </citation>
    <scope>NUCLEOTIDE SEQUENCE [LARGE SCALE GENOMIC DNA]</scope>
    <source>
        <strain>WH8102</strain>
    </source>
</reference>
<name>RL17_PARMW</name>
<keyword id="KW-0687">Ribonucleoprotein</keyword>
<keyword id="KW-0689">Ribosomal protein</keyword>
<comment type="subunit">
    <text evidence="1">Part of the 50S ribosomal subunit. Contacts protein L32.</text>
</comment>
<comment type="similarity">
    <text evidence="1">Belongs to the bacterial ribosomal protein bL17 family.</text>
</comment>
<evidence type="ECO:0000255" key="1">
    <source>
        <dbReference type="HAMAP-Rule" id="MF_01368"/>
    </source>
</evidence>
<evidence type="ECO:0000305" key="2"/>
<protein>
    <recommendedName>
        <fullName evidence="1">Large ribosomal subunit protein bL17</fullName>
    </recommendedName>
    <alternativeName>
        <fullName evidence="2">50S ribosomal protein L17</fullName>
    </alternativeName>
</protein>
<dbReference type="EMBL" id="BX569694">
    <property type="protein sequence ID" value="CAE08606.1"/>
    <property type="molecule type" value="Genomic_DNA"/>
</dbReference>
<dbReference type="RefSeq" id="WP_011128948.1">
    <property type="nucleotide sequence ID" value="NC_005070.1"/>
</dbReference>
<dbReference type="SMR" id="Q7U4H6"/>
<dbReference type="STRING" id="84588.SYNW2091"/>
<dbReference type="KEGG" id="syw:SYNW2091"/>
<dbReference type="eggNOG" id="COG0203">
    <property type="taxonomic scope" value="Bacteria"/>
</dbReference>
<dbReference type="HOGENOM" id="CLU_074407_2_2_3"/>
<dbReference type="Proteomes" id="UP000001422">
    <property type="component" value="Chromosome"/>
</dbReference>
<dbReference type="GO" id="GO:0022625">
    <property type="term" value="C:cytosolic large ribosomal subunit"/>
    <property type="evidence" value="ECO:0007669"/>
    <property type="project" value="TreeGrafter"/>
</dbReference>
<dbReference type="GO" id="GO:0003735">
    <property type="term" value="F:structural constituent of ribosome"/>
    <property type="evidence" value="ECO:0007669"/>
    <property type="project" value="InterPro"/>
</dbReference>
<dbReference type="GO" id="GO:0006412">
    <property type="term" value="P:translation"/>
    <property type="evidence" value="ECO:0007669"/>
    <property type="project" value="UniProtKB-UniRule"/>
</dbReference>
<dbReference type="FunFam" id="3.90.1030.10:FF:000001">
    <property type="entry name" value="50S ribosomal protein L17"/>
    <property type="match status" value="1"/>
</dbReference>
<dbReference type="Gene3D" id="3.90.1030.10">
    <property type="entry name" value="Ribosomal protein L17"/>
    <property type="match status" value="1"/>
</dbReference>
<dbReference type="HAMAP" id="MF_01368">
    <property type="entry name" value="Ribosomal_bL17"/>
    <property type="match status" value="1"/>
</dbReference>
<dbReference type="InterPro" id="IPR000456">
    <property type="entry name" value="Ribosomal_bL17"/>
</dbReference>
<dbReference type="InterPro" id="IPR036373">
    <property type="entry name" value="Ribosomal_bL17_sf"/>
</dbReference>
<dbReference type="NCBIfam" id="TIGR00059">
    <property type="entry name" value="L17"/>
    <property type="match status" value="1"/>
</dbReference>
<dbReference type="PANTHER" id="PTHR14413:SF16">
    <property type="entry name" value="LARGE RIBOSOMAL SUBUNIT PROTEIN BL17M"/>
    <property type="match status" value="1"/>
</dbReference>
<dbReference type="PANTHER" id="PTHR14413">
    <property type="entry name" value="RIBOSOMAL PROTEIN L17"/>
    <property type="match status" value="1"/>
</dbReference>
<dbReference type="Pfam" id="PF01196">
    <property type="entry name" value="Ribosomal_L17"/>
    <property type="match status" value="1"/>
</dbReference>
<dbReference type="SUPFAM" id="SSF64263">
    <property type="entry name" value="Prokaryotic ribosomal protein L17"/>
    <property type="match status" value="1"/>
</dbReference>
<organism>
    <name type="scientific">Parasynechococcus marenigrum (strain WH8102)</name>
    <dbReference type="NCBI Taxonomy" id="84588"/>
    <lineage>
        <taxon>Bacteria</taxon>
        <taxon>Bacillati</taxon>
        <taxon>Cyanobacteriota</taxon>
        <taxon>Cyanophyceae</taxon>
        <taxon>Synechococcales</taxon>
        <taxon>Prochlorococcaceae</taxon>
        <taxon>Parasynechococcus</taxon>
        <taxon>Parasynechococcus marenigrum</taxon>
    </lineage>
</organism>
<gene>
    <name evidence="1" type="primary">rplQ</name>
    <name evidence="1" type="synonym">rpl17</name>
    <name type="ordered locus">SYNW2091</name>
</gene>
<proteinExistence type="inferred from homology"/>
<feature type="chain" id="PRO_1000055976" description="Large ribosomal subunit protein bL17">
    <location>
        <begin position="1"/>
        <end position="116"/>
    </location>
</feature>
<sequence>MRHQCRVPQLGRPADQRKAMLRALTTQLIREGRVTTTKARAKALRDEAERMITLAKDGSLASRRRALGYIYDKQLVHALFDKAPDRYSDRKGGYTRITRTVPRRGDNAEMAIIELV</sequence>
<accession>Q7U4H6</accession>